<feature type="initiator methionine" description="Removed" evidence="2">
    <location>
        <position position="1"/>
    </location>
</feature>
<feature type="chain" id="PRO_0000090576" description="ADP/ATP translocase 1">
    <location>
        <begin position="2"/>
        <end position="298"/>
    </location>
</feature>
<feature type="topological domain" description="Mitochondrial intermembrane" evidence="8">
    <location>
        <begin position="1"/>
        <end position="7"/>
    </location>
</feature>
<feature type="transmembrane region" description="Helical; Name=1" evidence="2">
    <location>
        <begin position="8"/>
        <end position="37"/>
    </location>
</feature>
<feature type="topological domain" description="Mitochondrial matrix" evidence="8">
    <location>
        <begin position="38"/>
        <end position="74"/>
    </location>
</feature>
<feature type="transmembrane region" description="Helical; Name=2" evidence="2">
    <location>
        <begin position="75"/>
        <end position="99"/>
    </location>
</feature>
<feature type="topological domain" description="Mitochondrial intermembrane" evidence="8">
    <location>
        <begin position="100"/>
        <end position="109"/>
    </location>
</feature>
<feature type="transmembrane region" description="Helical; Name=3" evidence="2">
    <location>
        <begin position="110"/>
        <end position="130"/>
    </location>
</feature>
<feature type="topological domain" description="Mitochondrial matrix" evidence="8">
    <location>
        <begin position="131"/>
        <end position="178"/>
    </location>
</feature>
<feature type="transmembrane region" description="Helical; Name=4" evidence="2">
    <location>
        <begin position="179"/>
        <end position="199"/>
    </location>
</feature>
<feature type="topological domain" description="Mitochondrial intermembrane" evidence="8">
    <location>
        <begin position="200"/>
        <end position="210"/>
    </location>
</feature>
<feature type="transmembrane region" description="Helical; Name=5" evidence="2">
    <location>
        <begin position="211"/>
        <end position="231"/>
    </location>
</feature>
<feature type="topological domain" description="Mitochondrial matrix" evidence="8">
    <location>
        <begin position="232"/>
        <end position="273"/>
    </location>
</feature>
<feature type="transmembrane region" description="Helical; Name=6" evidence="2">
    <location>
        <begin position="274"/>
        <end position="291"/>
    </location>
</feature>
<feature type="topological domain" description="Mitochondrial intermembrane" evidence="8">
    <location>
        <begin position="292"/>
        <end position="298"/>
    </location>
</feature>
<feature type="repeat" description="Solcar 1">
    <location>
        <begin position="6"/>
        <end position="98"/>
    </location>
</feature>
<feature type="repeat" description="Solcar 2">
    <location>
        <begin position="111"/>
        <end position="201"/>
    </location>
</feature>
<feature type="repeat" description="Solcar 3">
    <location>
        <begin position="212"/>
        <end position="297"/>
    </location>
</feature>
<feature type="region of interest" description="Important for transport activity" evidence="3">
    <location>
        <begin position="235"/>
        <end position="240"/>
    </location>
</feature>
<feature type="short sequence motif" description="Nucleotide carrier signature motif" evidence="2">
    <location>
        <begin position="235"/>
        <end position="240"/>
    </location>
</feature>
<feature type="binding site" evidence="2">
    <location>
        <position position="80"/>
    </location>
    <ligand>
        <name>ADP</name>
        <dbReference type="ChEBI" id="CHEBI:456216"/>
    </ligand>
</feature>
<feature type="binding site" evidence="2">
    <location>
        <position position="92"/>
    </location>
    <ligand>
        <name>ADP</name>
        <dbReference type="ChEBI" id="CHEBI:456216"/>
    </ligand>
</feature>
<feature type="binding site" evidence="2">
    <location>
        <position position="235"/>
    </location>
    <ligand>
        <name>ADP</name>
        <dbReference type="ChEBI" id="CHEBI:456216"/>
    </ligand>
</feature>
<feature type="modified residue" description="N-acetylserine" evidence="2">
    <location>
        <position position="2"/>
    </location>
</feature>
<feature type="modified residue" description="Phosphoserine" evidence="5">
    <location>
        <position position="7"/>
    </location>
</feature>
<feature type="modified residue" description="N6,N6,N6-trimethyllysine" evidence="5">
    <location>
        <position position="52"/>
    </location>
</feature>
<feature type="modified residue" description="N6-succinyllysine" evidence="4">
    <location>
        <position position="147"/>
    </location>
</feature>
<feature type="modified residue" description="S-nitrosocysteine" evidence="5">
    <location>
        <position position="160"/>
    </location>
</feature>
<feature type="modified residue" description="N6-succinyllysine" evidence="4">
    <location>
        <position position="245"/>
    </location>
</feature>
<feature type="modified residue" description="N6-succinyllysine" evidence="4">
    <location>
        <position position="272"/>
    </location>
</feature>
<protein>
    <recommendedName>
        <fullName evidence="8">ADP/ATP translocase 1</fullName>
    </recommendedName>
    <alternativeName>
        <fullName evidence="7">30 kDa calsequestrin-binding protein</fullName>
        <shortName evidence="7">30 kDa CSQ-binding protein</shortName>
    </alternativeName>
    <alternativeName>
        <fullName evidence="4">ADP,ATP carrier protein 1</fullName>
    </alternativeName>
    <alternativeName>
        <fullName evidence="3">Adenine nucleotide translocator 1</fullName>
        <shortName evidence="3">ANT 1</shortName>
    </alternativeName>
    <alternativeName>
        <fullName evidence="8">Solute carrier family 25 member 4</fullName>
    </alternativeName>
</protein>
<proteinExistence type="evidence at transcript level"/>
<dbReference type="EMBL" id="AB009386">
    <property type="protein sequence ID" value="BAA23777.1"/>
    <property type="molecule type" value="mRNA"/>
</dbReference>
<dbReference type="RefSeq" id="NP_001076155.1">
    <property type="nucleotide sequence ID" value="NM_001082686.1"/>
</dbReference>
<dbReference type="RefSeq" id="XP_002715967.1">
    <property type="nucleotide sequence ID" value="XM_002715921.3"/>
</dbReference>
<dbReference type="SMR" id="O46373"/>
<dbReference type="FunCoup" id="O46373">
    <property type="interactions" value="1088"/>
</dbReference>
<dbReference type="STRING" id="9986.ENSOCUP00000022784"/>
<dbReference type="PaxDb" id="9986-ENSOCUP00000002239"/>
<dbReference type="Ensembl" id="ENSOCUT00000002593.4">
    <property type="protein sequence ID" value="ENSOCUP00000002239.3"/>
    <property type="gene ID" value="ENSOCUG00000002594.4"/>
</dbReference>
<dbReference type="GeneID" id="100009414"/>
<dbReference type="KEGG" id="ocu:100009414"/>
<dbReference type="KEGG" id="ocu:100349768"/>
<dbReference type="CTD" id="291"/>
<dbReference type="eggNOG" id="KOG0749">
    <property type="taxonomic scope" value="Eukaryota"/>
</dbReference>
<dbReference type="GeneTree" id="ENSGT00940000154622"/>
<dbReference type="HOGENOM" id="CLU_015166_12_0_1"/>
<dbReference type="InParanoid" id="O46373"/>
<dbReference type="OMA" id="CWATIYK"/>
<dbReference type="OrthoDB" id="270584at2759"/>
<dbReference type="TreeFam" id="TF300743"/>
<dbReference type="Proteomes" id="UP000001811">
    <property type="component" value="Chromosome 2"/>
</dbReference>
<dbReference type="Bgee" id="ENSOCUG00000002594">
    <property type="expression patterns" value="Expressed in heart and 16 other cell types or tissues"/>
</dbReference>
<dbReference type="GO" id="GO:0016020">
    <property type="term" value="C:membrane"/>
    <property type="evidence" value="ECO:0000250"/>
    <property type="project" value="UniProtKB"/>
</dbReference>
<dbReference type="GO" id="GO:0005743">
    <property type="term" value="C:mitochondrial inner membrane"/>
    <property type="evidence" value="ECO:0000250"/>
    <property type="project" value="UniProtKB"/>
</dbReference>
<dbReference type="GO" id="GO:0031966">
    <property type="term" value="C:mitochondrial membrane"/>
    <property type="evidence" value="ECO:0000250"/>
    <property type="project" value="UniProtKB"/>
</dbReference>
<dbReference type="GO" id="GO:0005757">
    <property type="term" value="C:mitochondrial permeability transition pore complex"/>
    <property type="evidence" value="ECO:0000250"/>
    <property type="project" value="UniProtKB"/>
</dbReference>
<dbReference type="GO" id="GO:0005471">
    <property type="term" value="F:ATP:ADP antiporter activity"/>
    <property type="evidence" value="ECO:0000250"/>
    <property type="project" value="UniProtKB"/>
</dbReference>
<dbReference type="GO" id="GO:0017077">
    <property type="term" value="F:oxidative phosphorylation uncoupler activity"/>
    <property type="evidence" value="ECO:0000250"/>
    <property type="project" value="UniProtKB"/>
</dbReference>
<dbReference type="GO" id="GO:1990845">
    <property type="term" value="P:adaptive thermogenesis"/>
    <property type="evidence" value="ECO:0000250"/>
    <property type="project" value="UniProtKB"/>
</dbReference>
<dbReference type="GO" id="GO:0015866">
    <property type="term" value="P:ADP transport"/>
    <property type="evidence" value="ECO:0000250"/>
    <property type="project" value="UniProtKB"/>
</dbReference>
<dbReference type="GO" id="GO:0140021">
    <property type="term" value="P:mitochondrial ADP transmembrane transport"/>
    <property type="evidence" value="ECO:0000250"/>
    <property type="project" value="UniProtKB"/>
</dbReference>
<dbReference type="GO" id="GO:1990544">
    <property type="term" value="P:mitochondrial ATP transmembrane transport"/>
    <property type="evidence" value="ECO:0000250"/>
    <property type="project" value="UniProtKB"/>
</dbReference>
<dbReference type="GO" id="GO:1901029">
    <property type="term" value="P:negative regulation of mitochondrial outer membrane permeabilization involved in apoptotic signaling pathway"/>
    <property type="evidence" value="ECO:0007669"/>
    <property type="project" value="TreeGrafter"/>
</dbReference>
<dbReference type="GO" id="GO:1901526">
    <property type="term" value="P:positive regulation of mitophagy"/>
    <property type="evidence" value="ECO:0000250"/>
    <property type="project" value="UniProtKB"/>
</dbReference>
<dbReference type="GO" id="GO:0046902">
    <property type="term" value="P:regulation of mitochondrial membrane permeability"/>
    <property type="evidence" value="ECO:0000250"/>
    <property type="project" value="UniProtKB"/>
</dbReference>
<dbReference type="FunFam" id="1.50.40.10:FF:000002">
    <property type="entry name" value="Putative ADP/ATP translocase 2-like"/>
    <property type="match status" value="1"/>
</dbReference>
<dbReference type="Gene3D" id="1.50.40.10">
    <property type="entry name" value="Mitochondrial carrier domain"/>
    <property type="match status" value="1"/>
</dbReference>
<dbReference type="InterPro" id="IPR002113">
    <property type="entry name" value="ADT_euk_type"/>
</dbReference>
<dbReference type="InterPro" id="IPR002067">
    <property type="entry name" value="Mit_carrier"/>
</dbReference>
<dbReference type="InterPro" id="IPR018108">
    <property type="entry name" value="Mitochondrial_sb/sol_carrier"/>
</dbReference>
<dbReference type="InterPro" id="IPR023395">
    <property type="entry name" value="Mt_carrier_dom_sf"/>
</dbReference>
<dbReference type="PANTHER" id="PTHR45635">
    <property type="entry name" value="ADP,ATP CARRIER PROTEIN 1-RELATED-RELATED"/>
    <property type="match status" value="1"/>
</dbReference>
<dbReference type="PANTHER" id="PTHR45635:SF32">
    <property type="entry name" value="ADP_ATP TRANSLOCASE 1"/>
    <property type="match status" value="1"/>
</dbReference>
<dbReference type="Pfam" id="PF00153">
    <property type="entry name" value="Mito_carr"/>
    <property type="match status" value="3"/>
</dbReference>
<dbReference type="PRINTS" id="PR00927">
    <property type="entry name" value="ADPTRNSLCASE"/>
</dbReference>
<dbReference type="PRINTS" id="PR00926">
    <property type="entry name" value="MITOCARRIER"/>
</dbReference>
<dbReference type="SUPFAM" id="SSF103506">
    <property type="entry name" value="Mitochondrial carrier"/>
    <property type="match status" value="1"/>
</dbReference>
<dbReference type="PROSITE" id="PS50920">
    <property type="entry name" value="SOLCAR"/>
    <property type="match status" value="3"/>
</dbReference>
<accession>O46373</accession>
<evidence type="ECO:0000250" key="1">
    <source>
        <dbReference type="UniProtKB" id="G2QNH0"/>
    </source>
</evidence>
<evidence type="ECO:0000250" key="2">
    <source>
        <dbReference type="UniProtKB" id="P02722"/>
    </source>
</evidence>
<evidence type="ECO:0000250" key="3">
    <source>
        <dbReference type="UniProtKB" id="P12235"/>
    </source>
</evidence>
<evidence type="ECO:0000250" key="4">
    <source>
        <dbReference type="UniProtKB" id="P48962"/>
    </source>
</evidence>
<evidence type="ECO:0000250" key="5">
    <source>
        <dbReference type="UniProtKB" id="Q05962"/>
    </source>
</evidence>
<evidence type="ECO:0000255" key="6"/>
<evidence type="ECO:0000303" key="7">
    <source>
    </source>
</evidence>
<evidence type="ECO:0000305" key="8"/>
<comment type="function">
    <text evidence="1 4">ADP:ATP antiporter that mediates import of ADP into the mitochondrial matrix for ATP synthesis, and export of ATP out to fuel the cell (By similarity). Cycles between the cytoplasmic-open state (c-state) and the matrix-open state (m-state): operates by the alternating access mechanism with a single substrate-binding site intermittently exposed to either the cytosolic (c-state) or matrix (m-state) side of the inner mitochondrial membrane (By similarity). In addition to its ADP:ATP antiporter activity, also involved in mitochondrial uncoupling and mitochondrial permeability transition pore (mPTP) activity. Plays a role in mitochondrial uncoupling by acting as a proton transporter: proton transport uncouples the proton flows via the electron transport chain and ATP synthase to reduce the efficiency of ATP production and cause mitochondrial thermogenesis. Proton transporter activity is inhibited by ADP:ATP antiporter activity, suggesting that SLC25A4/ANT1 acts as a master regulator of mitochondrial energy output by maintaining a delicate balance between ATP production (ADP:ATP antiporter activity) and thermogenesis (proton transporter activity). Proton transporter activity requires free fatty acids as cofactor, but does not transport it. Probably mediates mitochondrial uncoupling in tissues that do not express UCP1. Also plays a key role in mPTP opening, a non-specific pore that enables free passage of the mitochondrial membranes to solutes of up to 1.5 kDa, and which contributes to cell death. It is however unclear if SLC25A4/ANT1 constitutes a pore-forming component of mPTP or regulates it (By similarity). Acts as a regulator of mitophagy independently of ADP:ATP antiporter activity: promotes mitophagy via interaction with TIMM44, leading to inhibit the presequence translocase TIMM23, thereby promoting stabilization of PINK1 (By similarity).</text>
</comment>
<comment type="catalytic activity">
    <reaction evidence="4">
        <text>ADP(in) + ATP(out) = ADP(out) + ATP(in)</text>
        <dbReference type="Rhea" id="RHEA:34999"/>
        <dbReference type="ChEBI" id="CHEBI:30616"/>
        <dbReference type="ChEBI" id="CHEBI:456216"/>
    </reaction>
</comment>
<comment type="catalytic activity">
    <reaction evidence="4">
        <text>H(+)(in) = H(+)(out)</text>
        <dbReference type="Rhea" id="RHEA:34979"/>
        <dbReference type="ChEBI" id="CHEBI:15378"/>
    </reaction>
</comment>
<comment type="activity regulation">
    <text evidence="1 4">The matrix-open state (m-state) is inhibited by the membrane-permeable bongkrekic acid (BKA). The cytoplasmic-open state (c-state) is inhibited by the membrane-impermeable toxic inhibitor carboxyatractyloside (CATR) (By similarity). Proton transporter activity is inhibited by ADP:ATP antiporter activity (By similarity).</text>
</comment>
<comment type="subunit">
    <text evidence="1 2 4">Monomer (By similarity). Found in a complex with ARL2, ARL2BP and SLC25A4/ANT1. Interacts with ARL2BP. Interacts with TIMM44; leading to inhibit the presequence translocase TIMM23, thereby promoting stabilization of PINK1 (By similarity).</text>
</comment>
<comment type="subcellular location">
    <subcellularLocation>
        <location evidence="2">Mitochondrion inner membrane</location>
        <topology evidence="6">Multi-pass membrane protein</topology>
    </subcellularLocation>
    <subcellularLocation>
        <location evidence="3">Membrane</location>
        <topology evidence="6">Multi-pass membrane protein</topology>
    </subcellularLocation>
    <text evidence="3 4">The complex formed with ARL2BP, ARL2 and SLC25A4/ANT1 is expressed in mitochondria (By similarity). May localize to non-mitochondrial membranes (By similarity).</text>
</comment>
<comment type="domain">
    <text evidence="2">The transmembrane helices are not perpendicular to the plane of the membrane, but cross the membrane at an angle. Odd-numbered transmembrane helices exhibit a sharp kink, due to the presence of a conserved proline residue.</text>
</comment>
<comment type="PTM">
    <text evidence="4">Under cell death induction, transglutaminated by TGM2. Transglutamination leads to formation of covalent cross-links between a glutamine and the epsilon-amino group of a lysine residue, forming polymers.</text>
</comment>
<comment type="similarity">
    <text evidence="8">Belongs to the mitochondrial carrier (TC 2.A.29) family.</text>
</comment>
<reference key="1">
    <citation type="journal article" date="1998" name="Biochem. J.">
        <title>Identification of 30 kDa calsequestrin-binding protein, which regulates calcium release from sarcoplasmic reticulum of rabbit skeletal muscle.</title>
        <authorList>
            <person name="Yamaguchi N."/>
            <person name="Kasai M."/>
        </authorList>
    </citation>
    <scope>NUCLEOTIDE SEQUENCE [MRNA]</scope>
    <source>
        <tissue>Skeletal muscle</tissue>
    </source>
</reference>
<keyword id="KW-0007">Acetylation</keyword>
<keyword id="KW-0050">Antiport</keyword>
<keyword id="KW-0472">Membrane</keyword>
<keyword id="KW-0488">Methylation</keyword>
<keyword id="KW-0496">Mitochondrion</keyword>
<keyword id="KW-0999">Mitochondrion inner membrane</keyword>
<keyword id="KW-0597">Phosphoprotein</keyword>
<keyword id="KW-1185">Reference proteome</keyword>
<keyword id="KW-0677">Repeat</keyword>
<keyword id="KW-0702">S-nitrosylation</keyword>
<keyword id="KW-0812">Transmembrane</keyword>
<keyword id="KW-1133">Transmembrane helix</keyword>
<keyword id="KW-0813">Transport</keyword>
<organism>
    <name type="scientific">Oryctolagus cuniculus</name>
    <name type="common">Rabbit</name>
    <dbReference type="NCBI Taxonomy" id="9986"/>
    <lineage>
        <taxon>Eukaryota</taxon>
        <taxon>Metazoa</taxon>
        <taxon>Chordata</taxon>
        <taxon>Craniata</taxon>
        <taxon>Vertebrata</taxon>
        <taxon>Euteleostomi</taxon>
        <taxon>Mammalia</taxon>
        <taxon>Eutheria</taxon>
        <taxon>Euarchontoglires</taxon>
        <taxon>Glires</taxon>
        <taxon>Lagomorpha</taxon>
        <taxon>Leporidae</taxon>
        <taxon>Oryctolagus</taxon>
    </lineage>
</organism>
<name>ADT1_RABIT</name>
<sequence>MSDQALSFLKDFLAGGVAAAVSKTAVAPIERVKLLLQVQHASKQISAEKQYKGIIDCVVRIPKEQGFLSFWRGNLANVIRYFPTQALNFAFKDKYKQIFLGGVDRHKQFWRYFAGNLASGGAAGATSLCFVYPLDFARTRLAADVGKGAAQREFSGLGNCLTKIFKSDGLRGLYQGFNVSVQGIIIYRAAYFGVYDTAKGMLPDPKNVHIIVSWMIAQTVTAVAGLVSYPFDTVRRRMMMQSGRKGADIMYTGTVDCWKKIAKDEGAKAFFKGAWSNVLRGMGGAFVLVLYDEIKKYV</sequence>
<gene>
    <name evidence="3" type="primary">SLC25A4</name>
    <name evidence="4" type="synonym">AAC1</name>
    <name evidence="7" type="synonym">ANT1</name>
</gene>